<comment type="function">
    <text>Visual pigments are the light-absorbing molecules that mediate vision. They consist of an apoprotein, opsin, covalently linked to cis-retinal.</text>
</comment>
<comment type="subcellular location">
    <subcellularLocation>
        <location>Membrane</location>
        <topology>Multi-pass membrane protein</topology>
    </subcellularLocation>
</comment>
<comment type="alternative products">
    <event type="alternative splicing"/>
    <isoform>
        <id>O01668-1</id>
        <name>B</name>
        <sequence type="displayed"/>
    </isoform>
    <isoform>
        <id>O01668-2</id>
        <name>A</name>
        <sequence type="described" ref="VSP_009271"/>
    </isoform>
</comment>
<comment type="tissue specificity">
    <text>Each Drosophila eye is composed of 800 facets or ommatidia. Each ommatidium contains 8 photoreceptor cells (R1-R8), the R1 to R6 cells are outer cells, while R7 and R8 are inner cells. Rh6 is expressed in a subset of R8 cells, most likely expressed in the subset of R8 cells paired with Rh4-expressing R7 cells (R7y).</text>
</comment>
<comment type="PTM">
    <text evidence="1">Phosphorylated on some or all of the serine and threonine residues present in the C-terminal region.</text>
</comment>
<comment type="similarity">
    <text evidence="3">Belongs to the G-protein coupled receptor 1 family. Opsin subfamily.</text>
</comment>
<evidence type="ECO:0000250" key="1"/>
<evidence type="ECO:0000255" key="2"/>
<evidence type="ECO:0000255" key="3">
    <source>
        <dbReference type="PROSITE-ProRule" id="PRU00521"/>
    </source>
</evidence>
<evidence type="ECO:0000303" key="4">
    <source>
    </source>
</evidence>
<proteinExistence type="evidence at transcript level"/>
<accession>O01668</accession>
<accession>Q8SXF4</accession>
<accession>Q9VF58</accession>
<dbReference type="EMBL" id="Z86118">
    <property type="protein sequence ID" value="CAB06821.1"/>
    <property type="molecule type" value="mRNA"/>
</dbReference>
<dbReference type="EMBL" id="AE014297">
    <property type="protein sequence ID" value="AAN13666.2"/>
    <property type="molecule type" value="Genomic_DNA"/>
</dbReference>
<dbReference type="EMBL" id="AY089666">
    <property type="protein sequence ID" value="AAL90404.1"/>
    <property type="molecule type" value="mRNA"/>
</dbReference>
<dbReference type="RefSeq" id="NP_524368.4">
    <molecule id="O01668-1"/>
    <property type="nucleotide sequence ID" value="NM_079644.3"/>
</dbReference>
<dbReference type="SMR" id="O01668"/>
<dbReference type="BioGRID" id="66950">
    <property type="interactions" value="1"/>
</dbReference>
<dbReference type="FunCoup" id="O01668">
    <property type="interactions" value="18"/>
</dbReference>
<dbReference type="STRING" id="7227.FBpp0312616"/>
<dbReference type="GlyCosmos" id="O01668">
    <property type="glycosylation" value="3 sites, No reported glycans"/>
</dbReference>
<dbReference type="GlyGen" id="O01668">
    <property type="glycosylation" value="3 sites"/>
</dbReference>
<dbReference type="PaxDb" id="7227-FBpp0082600"/>
<dbReference type="EnsemblMetazoa" id="FBtr0480497">
    <molecule id="O01668-1"/>
    <property type="protein sequence ID" value="FBpp0428299"/>
    <property type="gene ID" value="FBgn0019940"/>
</dbReference>
<dbReference type="GeneID" id="41889"/>
<dbReference type="KEGG" id="dme:Dmel_CG5192"/>
<dbReference type="AGR" id="FB:FBgn0019940"/>
<dbReference type="CTD" id="41889"/>
<dbReference type="FlyBase" id="FBgn0019940">
    <property type="gene designation" value="Rh6"/>
</dbReference>
<dbReference type="VEuPathDB" id="VectorBase:FBgn0019940"/>
<dbReference type="eggNOG" id="KOG3656">
    <property type="taxonomic scope" value="Eukaryota"/>
</dbReference>
<dbReference type="HOGENOM" id="CLU_718813_0_0_1"/>
<dbReference type="InParanoid" id="O01668"/>
<dbReference type="OrthoDB" id="9996086at2759"/>
<dbReference type="PhylomeDB" id="O01668"/>
<dbReference type="Reactome" id="R-DME-416476">
    <property type="pathway name" value="G alpha (q) signalling events"/>
</dbReference>
<dbReference type="Reactome" id="R-DME-419771">
    <property type="pathway name" value="Opsins"/>
</dbReference>
<dbReference type="BioGRID-ORCS" id="41889">
    <property type="hits" value="0 hits in 3 CRISPR screens"/>
</dbReference>
<dbReference type="GenomeRNAi" id="41889"/>
<dbReference type="PRO" id="PR:O01668"/>
<dbReference type="Proteomes" id="UP000000803">
    <property type="component" value="Chromosome 3R"/>
</dbReference>
<dbReference type="Bgee" id="FBgn0019940">
    <property type="expression patterns" value="Expressed in photoreceptor cell R8 (Drosophila) in insect head and 72 other cell types or tissues"/>
</dbReference>
<dbReference type="GO" id="GO:0016020">
    <property type="term" value="C:membrane"/>
    <property type="evidence" value="ECO:0000250"/>
    <property type="project" value="FlyBase"/>
</dbReference>
<dbReference type="GO" id="GO:0005886">
    <property type="term" value="C:plasma membrane"/>
    <property type="evidence" value="ECO:0000318"/>
    <property type="project" value="GO_Central"/>
</dbReference>
<dbReference type="GO" id="GO:0016028">
    <property type="term" value="C:rhabdomere"/>
    <property type="evidence" value="ECO:0000314"/>
    <property type="project" value="FlyBase"/>
</dbReference>
<dbReference type="GO" id="GO:0008020">
    <property type="term" value="F:G protein-coupled photoreceptor activity"/>
    <property type="evidence" value="ECO:0000316"/>
    <property type="project" value="FlyBase"/>
</dbReference>
<dbReference type="GO" id="GO:0071482">
    <property type="term" value="P:cellular response to light stimulus"/>
    <property type="evidence" value="ECO:0000318"/>
    <property type="project" value="GO_Central"/>
</dbReference>
<dbReference type="GO" id="GO:0043153">
    <property type="term" value="P:entrainment of circadian clock by photoperiod"/>
    <property type="evidence" value="ECO:0000316"/>
    <property type="project" value="FlyBase"/>
</dbReference>
<dbReference type="GO" id="GO:0007186">
    <property type="term" value="P:G protein-coupled receptor signaling pathway"/>
    <property type="evidence" value="ECO:0000250"/>
    <property type="project" value="FlyBase"/>
</dbReference>
<dbReference type="GO" id="GO:0000122">
    <property type="term" value="P:negative regulation of transcription by RNA polymerase II"/>
    <property type="evidence" value="ECO:0000315"/>
    <property type="project" value="FlyBase"/>
</dbReference>
<dbReference type="GO" id="GO:0007602">
    <property type="term" value="P:phototransduction"/>
    <property type="evidence" value="ECO:0000316"/>
    <property type="project" value="FlyBase"/>
</dbReference>
<dbReference type="GO" id="GO:0007605">
    <property type="term" value="P:sensory perception of sound"/>
    <property type="evidence" value="ECO:0000315"/>
    <property type="project" value="FlyBase"/>
</dbReference>
<dbReference type="GO" id="GO:0043052">
    <property type="term" value="P:thermotaxis"/>
    <property type="evidence" value="ECO:0000315"/>
    <property type="project" value="FlyBase"/>
</dbReference>
<dbReference type="GO" id="GO:0007601">
    <property type="term" value="P:visual perception"/>
    <property type="evidence" value="ECO:0007669"/>
    <property type="project" value="UniProtKB-KW"/>
</dbReference>
<dbReference type="CDD" id="cd15079">
    <property type="entry name" value="7tmA_photoreceptors_insect"/>
    <property type="match status" value="1"/>
</dbReference>
<dbReference type="FunFam" id="1.20.1070.10:FF:000044">
    <property type="entry name" value="Opsin, ultraviolet-sensitive"/>
    <property type="match status" value="1"/>
</dbReference>
<dbReference type="Gene3D" id="1.20.1070.10">
    <property type="entry name" value="Rhodopsin 7-helix transmembrane proteins"/>
    <property type="match status" value="1"/>
</dbReference>
<dbReference type="InterPro" id="IPR050125">
    <property type="entry name" value="GPCR_opsins"/>
</dbReference>
<dbReference type="InterPro" id="IPR000276">
    <property type="entry name" value="GPCR_Rhodpsn"/>
</dbReference>
<dbReference type="InterPro" id="IPR017452">
    <property type="entry name" value="GPCR_Rhodpsn_7TM"/>
</dbReference>
<dbReference type="InterPro" id="IPR001760">
    <property type="entry name" value="Opsin"/>
</dbReference>
<dbReference type="InterPro" id="IPR001735">
    <property type="entry name" value="Opsin_RH1/RH2"/>
</dbReference>
<dbReference type="InterPro" id="IPR027430">
    <property type="entry name" value="Retinal_BS"/>
</dbReference>
<dbReference type="PANTHER" id="PTHR24240">
    <property type="entry name" value="OPSIN"/>
    <property type="match status" value="1"/>
</dbReference>
<dbReference type="Pfam" id="PF00001">
    <property type="entry name" value="7tm_1"/>
    <property type="match status" value="1"/>
</dbReference>
<dbReference type="PRINTS" id="PR00237">
    <property type="entry name" value="GPCRRHODOPSN"/>
</dbReference>
<dbReference type="PRINTS" id="PR00238">
    <property type="entry name" value="OPSIN"/>
</dbReference>
<dbReference type="PRINTS" id="PR00576">
    <property type="entry name" value="OPSINRH1RH2"/>
</dbReference>
<dbReference type="SMART" id="SM01381">
    <property type="entry name" value="7TM_GPCR_Srsx"/>
    <property type="match status" value="1"/>
</dbReference>
<dbReference type="SUPFAM" id="SSF81321">
    <property type="entry name" value="Family A G protein-coupled receptor-like"/>
    <property type="match status" value="1"/>
</dbReference>
<dbReference type="PROSITE" id="PS00237">
    <property type="entry name" value="G_PROTEIN_RECEP_F1_1"/>
    <property type="match status" value="1"/>
</dbReference>
<dbReference type="PROSITE" id="PS50262">
    <property type="entry name" value="G_PROTEIN_RECEP_F1_2"/>
    <property type="match status" value="1"/>
</dbReference>
<dbReference type="PROSITE" id="PS00238">
    <property type="entry name" value="OPSIN"/>
    <property type="match status" value="1"/>
</dbReference>
<name>OPS6_DROME</name>
<sequence length="369" mass="41691">MASLHPPSFAYMRDGRNLSLAESVPAEIMHMVDPYWYQWPPLEPMWFGIIGFVIAILGTMSLAGNFIVMYIFTSSKGLRTPSNMFVVNLAFSDFMMMFTMFPPVVLNGFYGTWIMGPFLCELYGMFGSLFGCVSIWSMTLIAYDRYCVIVKGMARKPLTATAAVLRLMVVWTICGAWALMPLFGWNRYVPEGNMTACGTDYFAKDWWNRSYIIVYSLWVYLTPLLTIIFSYWHIMKAVAAHEKAMREQAKKMNVASLRNSEADKSKAIEIKLAKVALTTISLWFFAWTPYTIINYAGIFESMHLSPLSTICGSVFAKANAVCNPIVYGLSHPKYKQVLREKMPCLACGKDDLTSDSRTQATAEISESQA</sequence>
<keyword id="KW-0025">Alternative splicing</keyword>
<keyword id="KW-0157">Chromophore</keyword>
<keyword id="KW-1015">Disulfide bond</keyword>
<keyword id="KW-0297">G-protein coupled receptor</keyword>
<keyword id="KW-0325">Glycoprotein</keyword>
<keyword id="KW-0472">Membrane</keyword>
<keyword id="KW-0597">Phosphoprotein</keyword>
<keyword id="KW-0600">Photoreceptor protein</keyword>
<keyword id="KW-0675">Receptor</keyword>
<keyword id="KW-1185">Reference proteome</keyword>
<keyword id="KW-0681">Retinal protein</keyword>
<keyword id="KW-0716">Sensory transduction</keyword>
<keyword id="KW-0807">Transducer</keyword>
<keyword id="KW-0812">Transmembrane</keyword>
<keyword id="KW-1133">Transmembrane helix</keyword>
<keyword id="KW-0844">Vision</keyword>
<gene>
    <name type="primary">Rh6</name>
    <name type="ORF">CG5192</name>
</gene>
<feature type="chain" id="PRO_0000197634" description="Opsin Rh6">
    <location>
        <begin position="1"/>
        <end position="369"/>
    </location>
</feature>
<feature type="topological domain" description="Extracellular">
    <location>
        <begin position="1"/>
        <end position="46"/>
    </location>
</feature>
<feature type="transmembrane region" description="Helical; Name=1" evidence="2">
    <location>
        <begin position="47"/>
        <end position="71"/>
    </location>
</feature>
<feature type="topological domain" description="Cytoplasmic">
    <location>
        <begin position="72"/>
        <end position="83"/>
    </location>
</feature>
<feature type="transmembrane region" description="Helical; Name=2" evidence="2">
    <location>
        <begin position="84"/>
        <end position="109"/>
    </location>
</feature>
<feature type="topological domain" description="Extracellular">
    <location>
        <begin position="110"/>
        <end position="123"/>
    </location>
</feature>
<feature type="transmembrane region" description="Helical; Name=3" evidence="2">
    <location>
        <begin position="124"/>
        <end position="143"/>
    </location>
</feature>
<feature type="topological domain" description="Cytoplasmic">
    <location>
        <begin position="144"/>
        <end position="162"/>
    </location>
</feature>
<feature type="transmembrane region" description="Helical; Name=4" evidence="2">
    <location>
        <begin position="163"/>
        <end position="186"/>
    </location>
</feature>
<feature type="topological domain" description="Extracellular">
    <location>
        <begin position="187"/>
        <end position="210"/>
    </location>
</feature>
<feature type="transmembrane region" description="Helical; Name=5" evidence="2">
    <location>
        <begin position="211"/>
        <end position="238"/>
    </location>
</feature>
<feature type="topological domain" description="Cytoplasmic">
    <location>
        <begin position="239"/>
        <end position="274"/>
    </location>
</feature>
<feature type="transmembrane region" description="Helical; Name=6" evidence="2">
    <location>
        <begin position="275"/>
        <end position="298"/>
    </location>
</feature>
<feature type="topological domain" description="Extracellular">
    <location>
        <begin position="299"/>
        <end position="305"/>
    </location>
</feature>
<feature type="transmembrane region" description="Helical; Name=7" evidence="2">
    <location>
        <begin position="306"/>
        <end position="330"/>
    </location>
</feature>
<feature type="topological domain" description="Cytoplasmic">
    <location>
        <begin position="331"/>
        <end position="369"/>
    </location>
</feature>
<feature type="modified residue" description="N6-(retinylidene)lysine" evidence="1">
    <location>
        <position position="317"/>
    </location>
</feature>
<feature type="glycosylation site" description="N-linked (GlcNAc...) asparagine" evidence="2">
    <location>
        <position position="17"/>
    </location>
</feature>
<feature type="glycosylation site" description="N-linked (GlcNAc...) asparagine" evidence="2">
    <location>
        <position position="193"/>
    </location>
</feature>
<feature type="glycosylation site" description="N-linked (GlcNAc...) asparagine" evidence="2">
    <location>
        <position position="208"/>
    </location>
</feature>
<feature type="disulfide bond" evidence="3">
    <location>
        <begin position="120"/>
        <end position="197"/>
    </location>
</feature>
<feature type="splice variant" id="VSP_009271" description="In isoform A." evidence="4">
    <location>
        <begin position="230"/>
        <end position="369"/>
    </location>
</feature>
<protein>
    <recommendedName>
        <fullName>Opsin Rh6</fullName>
    </recommendedName>
    <alternativeName>
        <fullName>Rhodopsin Rh6, long-wavelength</fullName>
    </alternativeName>
</protein>
<organism>
    <name type="scientific">Drosophila melanogaster</name>
    <name type="common">Fruit fly</name>
    <dbReference type="NCBI Taxonomy" id="7227"/>
    <lineage>
        <taxon>Eukaryota</taxon>
        <taxon>Metazoa</taxon>
        <taxon>Ecdysozoa</taxon>
        <taxon>Arthropoda</taxon>
        <taxon>Hexapoda</taxon>
        <taxon>Insecta</taxon>
        <taxon>Pterygota</taxon>
        <taxon>Neoptera</taxon>
        <taxon>Endopterygota</taxon>
        <taxon>Diptera</taxon>
        <taxon>Brachycera</taxon>
        <taxon>Muscomorpha</taxon>
        <taxon>Ephydroidea</taxon>
        <taxon>Drosophilidae</taxon>
        <taxon>Drosophila</taxon>
        <taxon>Sophophora</taxon>
    </lineage>
</organism>
<reference key="1">
    <citation type="journal article" date="1997" name="FEBS Lett.">
        <title>Molecular cloning of Drosophila Rh6 rhodopsin: the visual pigment of a subset of R8 photoreceptor cells.</title>
        <authorList>
            <person name="Huber A."/>
            <person name="Schulz S."/>
            <person name="Bentrop J."/>
            <person name="Groell C."/>
            <person name="Wolfrum U."/>
            <person name="Paulsen R."/>
        </authorList>
    </citation>
    <scope>NUCLEOTIDE SEQUENCE [MRNA] (ISOFORM B)</scope>
    <source>
        <strain>Oregon-R</strain>
        <tissue>Retina</tissue>
    </source>
</reference>
<reference key="2">
    <citation type="journal article" date="2000" name="Science">
        <title>The genome sequence of Drosophila melanogaster.</title>
        <authorList>
            <person name="Adams M.D."/>
            <person name="Celniker S.E."/>
            <person name="Holt R.A."/>
            <person name="Evans C.A."/>
            <person name="Gocayne J.D."/>
            <person name="Amanatides P.G."/>
            <person name="Scherer S.E."/>
            <person name="Li P.W."/>
            <person name="Hoskins R.A."/>
            <person name="Galle R.F."/>
            <person name="George R.A."/>
            <person name="Lewis S.E."/>
            <person name="Richards S."/>
            <person name="Ashburner M."/>
            <person name="Henderson S.N."/>
            <person name="Sutton G.G."/>
            <person name="Wortman J.R."/>
            <person name="Yandell M.D."/>
            <person name="Zhang Q."/>
            <person name="Chen L.X."/>
            <person name="Brandon R.C."/>
            <person name="Rogers Y.-H.C."/>
            <person name="Blazej R.G."/>
            <person name="Champe M."/>
            <person name="Pfeiffer B.D."/>
            <person name="Wan K.H."/>
            <person name="Doyle C."/>
            <person name="Baxter E.G."/>
            <person name="Helt G."/>
            <person name="Nelson C.R."/>
            <person name="Miklos G.L.G."/>
            <person name="Abril J.F."/>
            <person name="Agbayani A."/>
            <person name="An H.-J."/>
            <person name="Andrews-Pfannkoch C."/>
            <person name="Baldwin D."/>
            <person name="Ballew R.M."/>
            <person name="Basu A."/>
            <person name="Baxendale J."/>
            <person name="Bayraktaroglu L."/>
            <person name="Beasley E.M."/>
            <person name="Beeson K.Y."/>
            <person name="Benos P.V."/>
            <person name="Berman B.P."/>
            <person name="Bhandari D."/>
            <person name="Bolshakov S."/>
            <person name="Borkova D."/>
            <person name="Botchan M.R."/>
            <person name="Bouck J."/>
            <person name="Brokstein P."/>
            <person name="Brottier P."/>
            <person name="Burtis K.C."/>
            <person name="Busam D.A."/>
            <person name="Butler H."/>
            <person name="Cadieu E."/>
            <person name="Center A."/>
            <person name="Chandra I."/>
            <person name="Cherry J.M."/>
            <person name="Cawley S."/>
            <person name="Dahlke C."/>
            <person name="Davenport L.B."/>
            <person name="Davies P."/>
            <person name="de Pablos B."/>
            <person name="Delcher A."/>
            <person name="Deng Z."/>
            <person name="Mays A.D."/>
            <person name="Dew I."/>
            <person name="Dietz S.M."/>
            <person name="Dodson K."/>
            <person name="Doup L.E."/>
            <person name="Downes M."/>
            <person name="Dugan-Rocha S."/>
            <person name="Dunkov B.C."/>
            <person name="Dunn P."/>
            <person name="Durbin K.J."/>
            <person name="Evangelista C.C."/>
            <person name="Ferraz C."/>
            <person name="Ferriera S."/>
            <person name="Fleischmann W."/>
            <person name="Fosler C."/>
            <person name="Gabrielian A.E."/>
            <person name="Garg N.S."/>
            <person name="Gelbart W.M."/>
            <person name="Glasser K."/>
            <person name="Glodek A."/>
            <person name="Gong F."/>
            <person name="Gorrell J.H."/>
            <person name="Gu Z."/>
            <person name="Guan P."/>
            <person name="Harris M."/>
            <person name="Harris N.L."/>
            <person name="Harvey D.A."/>
            <person name="Heiman T.J."/>
            <person name="Hernandez J.R."/>
            <person name="Houck J."/>
            <person name="Hostin D."/>
            <person name="Houston K.A."/>
            <person name="Howland T.J."/>
            <person name="Wei M.-H."/>
            <person name="Ibegwam C."/>
            <person name="Jalali M."/>
            <person name="Kalush F."/>
            <person name="Karpen G.H."/>
            <person name="Ke Z."/>
            <person name="Kennison J.A."/>
            <person name="Ketchum K.A."/>
            <person name="Kimmel B.E."/>
            <person name="Kodira C.D."/>
            <person name="Kraft C.L."/>
            <person name="Kravitz S."/>
            <person name="Kulp D."/>
            <person name="Lai Z."/>
            <person name="Lasko P."/>
            <person name="Lei Y."/>
            <person name="Levitsky A.A."/>
            <person name="Li J.H."/>
            <person name="Li Z."/>
            <person name="Liang Y."/>
            <person name="Lin X."/>
            <person name="Liu X."/>
            <person name="Mattei B."/>
            <person name="McIntosh T.C."/>
            <person name="McLeod M.P."/>
            <person name="McPherson D."/>
            <person name="Merkulov G."/>
            <person name="Milshina N.V."/>
            <person name="Mobarry C."/>
            <person name="Morris J."/>
            <person name="Moshrefi A."/>
            <person name="Mount S.M."/>
            <person name="Moy M."/>
            <person name="Murphy B."/>
            <person name="Murphy L."/>
            <person name="Muzny D.M."/>
            <person name="Nelson D.L."/>
            <person name="Nelson D.R."/>
            <person name="Nelson K.A."/>
            <person name="Nixon K."/>
            <person name="Nusskern D.R."/>
            <person name="Pacleb J.M."/>
            <person name="Palazzolo M."/>
            <person name="Pittman G.S."/>
            <person name="Pan S."/>
            <person name="Pollard J."/>
            <person name="Puri V."/>
            <person name="Reese M.G."/>
            <person name="Reinert K."/>
            <person name="Remington K."/>
            <person name="Saunders R.D.C."/>
            <person name="Scheeler F."/>
            <person name="Shen H."/>
            <person name="Shue B.C."/>
            <person name="Siden-Kiamos I."/>
            <person name="Simpson M."/>
            <person name="Skupski M.P."/>
            <person name="Smith T.J."/>
            <person name="Spier E."/>
            <person name="Spradling A.C."/>
            <person name="Stapleton M."/>
            <person name="Strong R."/>
            <person name="Sun E."/>
            <person name="Svirskas R."/>
            <person name="Tector C."/>
            <person name="Turner R."/>
            <person name="Venter E."/>
            <person name="Wang A.H."/>
            <person name="Wang X."/>
            <person name="Wang Z.-Y."/>
            <person name="Wassarman D.A."/>
            <person name="Weinstock G.M."/>
            <person name="Weissenbach J."/>
            <person name="Williams S.M."/>
            <person name="Woodage T."/>
            <person name="Worley K.C."/>
            <person name="Wu D."/>
            <person name="Yang S."/>
            <person name="Yao Q.A."/>
            <person name="Ye J."/>
            <person name="Yeh R.-F."/>
            <person name="Zaveri J.S."/>
            <person name="Zhan M."/>
            <person name="Zhang G."/>
            <person name="Zhao Q."/>
            <person name="Zheng L."/>
            <person name="Zheng X.H."/>
            <person name="Zhong F.N."/>
            <person name="Zhong W."/>
            <person name="Zhou X."/>
            <person name="Zhu S.C."/>
            <person name="Zhu X."/>
            <person name="Smith H.O."/>
            <person name="Gibbs R.A."/>
            <person name="Myers E.W."/>
            <person name="Rubin G.M."/>
            <person name="Venter J.C."/>
        </authorList>
    </citation>
    <scope>NUCLEOTIDE SEQUENCE [LARGE SCALE GENOMIC DNA]</scope>
    <source>
        <strain>Berkeley</strain>
    </source>
</reference>
<reference key="3">
    <citation type="journal article" date="2002" name="Genome Biol.">
        <title>Annotation of the Drosophila melanogaster euchromatic genome: a systematic review.</title>
        <authorList>
            <person name="Misra S."/>
            <person name="Crosby M.A."/>
            <person name="Mungall C.J."/>
            <person name="Matthews B.B."/>
            <person name="Campbell K.S."/>
            <person name="Hradecky P."/>
            <person name="Huang Y."/>
            <person name="Kaminker J.S."/>
            <person name="Millburn G.H."/>
            <person name="Prochnik S.E."/>
            <person name="Smith C.D."/>
            <person name="Tupy J.L."/>
            <person name="Whitfield E.J."/>
            <person name="Bayraktaroglu L."/>
            <person name="Berman B.P."/>
            <person name="Bettencourt B.R."/>
            <person name="Celniker S.E."/>
            <person name="de Grey A.D.N.J."/>
            <person name="Drysdale R.A."/>
            <person name="Harris N.L."/>
            <person name="Richter J."/>
            <person name="Russo S."/>
            <person name="Schroeder A.J."/>
            <person name="Shu S.Q."/>
            <person name="Stapleton M."/>
            <person name="Yamada C."/>
            <person name="Ashburner M."/>
            <person name="Gelbart W.M."/>
            <person name="Rubin G.M."/>
            <person name="Lewis S.E."/>
        </authorList>
    </citation>
    <scope>GENOME REANNOTATION</scope>
    <source>
        <strain>Berkeley</strain>
    </source>
</reference>
<reference key="4">
    <citation type="journal article" date="2002" name="Genome Biol.">
        <title>A Drosophila full-length cDNA resource.</title>
        <authorList>
            <person name="Stapleton M."/>
            <person name="Carlson J.W."/>
            <person name="Brokstein P."/>
            <person name="Yu C."/>
            <person name="Champe M."/>
            <person name="George R.A."/>
            <person name="Guarin H."/>
            <person name="Kronmiller B."/>
            <person name="Pacleb J.M."/>
            <person name="Park S."/>
            <person name="Wan K.H."/>
            <person name="Rubin G.M."/>
            <person name="Celniker S.E."/>
        </authorList>
    </citation>
    <scope>NUCLEOTIDE SEQUENCE [LARGE SCALE MRNA] (ISOFORM A)</scope>
    <source>
        <strain>Berkeley</strain>
        <tissue>Head</tissue>
    </source>
</reference>